<protein>
    <recommendedName>
        <fullName>Transcobalamin-1</fullName>
        <shortName>TC-1</shortName>
    </recommendedName>
    <alternativeName>
        <fullName>Cobalophilin</fullName>
    </alternativeName>
    <alternativeName>
        <fullName>Haptocorrin</fullName>
    </alternativeName>
    <alternativeName>
        <fullName>Protein R</fullName>
    </alternativeName>
    <alternativeName>
        <fullName>Transcobalamin I</fullName>
        <shortName>TC I</shortName>
        <shortName>TCI</shortName>
    </alternativeName>
</protein>
<gene>
    <name type="primary">TCN1</name>
</gene>
<proteinExistence type="evidence at protein level"/>
<evidence type="ECO:0000250" key="1"/>
<evidence type="ECO:0000250" key="2">
    <source>
        <dbReference type="UniProtKB" id="P20061"/>
    </source>
</evidence>
<evidence type="ECO:0000255" key="3"/>
<evidence type="ECO:0000305" key="4"/>
<reference key="1">
    <citation type="journal article" date="1990" name="Eur. J. Biochem.">
        <title>Isolation and characterization of a cDNA encoding porcine gastric haptocorrin.</title>
        <authorList>
            <person name="Hewitt J.E."/>
            <person name="Seetharam B."/>
            <person name="Leykam J.F."/>
            <person name="Alpers D.H."/>
        </authorList>
    </citation>
    <scope>NUCLEOTIDE SEQUENCE [MRNA] OF 2-417</scope>
    <scope>PARTIAL PROTEIN SEQUENCE</scope>
    <source>
        <tissue>Stomach</tissue>
    </source>
</reference>
<feature type="signal peptide" evidence="4">
    <location>
        <begin position="1"/>
        <end position="25"/>
    </location>
</feature>
<feature type="chain" id="PRO_0000005562" description="Transcobalamin-1">
    <location>
        <begin position="26"/>
        <end position="417"/>
    </location>
</feature>
<feature type="region of interest" description="Globular N-terminal alpha domain" evidence="1">
    <location>
        <begin position="24"/>
        <end position="308"/>
    </location>
</feature>
<feature type="region of interest" description="Flexible linker" evidence="1">
    <location>
        <begin position="309"/>
        <end position="327"/>
    </location>
</feature>
<feature type="region of interest" description="Globular C-terminal beta domain" evidence="1">
    <location>
        <begin position="328"/>
        <end position="417"/>
    </location>
</feature>
<feature type="binding site" evidence="2">
    <location>
        <begin position="143"/>
        <end position="147"/>
    </location>
    <ligand>
        <name>cyanocob(III)alamin</name>
        <dbReference type="ChEBI" id="CHEBI:17439"/>
    </ligand>
</feature>
<feature type="binding site" evidence="2">
    <location>
        <position position="187"/>
    </location>
    <ligand>
        <name>cyanocob(III)alamin</name>
        <dbReference type="ChEBI" id="CHEBI:17439"/>
    </ligand>
</feature>
<feature type="binding site" evidence="2">
    <location>
        <position position="287"/>
    </location>
    <ligand>
        <name>cyanocob(III)alamin</name>
        <dbReference type="ChEBI" id="CHEBI:17439"/>
    </ligand>
</feature>
<feature type="binding site" evidence="2">
    <location>
        <begin position="376"/>
        <end position="377"/>
    </location>
    <ligand>
        <name>cyanocob(III)alamin</name>
        <dbReference type="ChEBI" id="CHEBI:17439"/>
    </ligand>
</feature>
<feature type="binding site" evidence="2">
    <location>
        <begin position="393"/>
        <end position="395"/>
    </location>
    <ligand>
        <name>cyanocob(III)alamin</name>
        <dbReference type="ChEBI" id="CHEBI:17439"/>
    </ligand>
</feature>
<feature type="glycosylation site" description="N-linked (GlcNAc...) asparagine" evidence="3">
    <location>
        <position position="90"/>
    </location>
</feature>
<feature type="glycosylation site" description="N-linked (GlcNAc...) asparagine" evidence="3">
    <location>
        <position position="161"/>
    </location>
</feature>
<feature type="glycosylation site" description="N-linked (GlcNAc...) asparagine" evidence="3">
    <location>
        <position position="166"/>
    </location>
</feature>
<feature type="glycosylation site" description="N-linked (GlcNAc...) asparagine" evidence="3">
    <location>
        <position position="179"/>
    </location>
</feature>
<feature type="glycosylation site" description="N-linked (GlcNAc...) asparagine" evidence="3">
    <location>
        <position position="312"/>
    </location>
</feature>
<feature type="glycosylation site" description="N-linked (GlcNAc...) asparagine" evidence="3">
    <location>
        <position position="328"/>
    </location>
</feature>
<feature type="glycosylation site" description="N-linked (GlcNAc...) asparagine" evidence="3">
    <location>
        <position position="345"/>
    </location>
</feature>
<feature type="glycosylation site" description="N-linked (GlcNAc...) asparagine" evidence="3">
    <location>
        <position position="360"/>
    </location>
</feature>
<feature type="disulfide bond" evidence="1">
    <location>
        <begin position="156"/>
        <end position="198"/>
    </location>
</feature>
<accession>P17630</accession>
<comment type="function">
    <text evidence="1">Binds vitamin B12 with femtomolar affinity and protects it from the acidic environment of the stomach (By similarity). Binds to cobalamin and to cobalamin analogs such as cobinamide.</text>
</comment>
<comment type="subcellular location">
    <subcellularLocation>
        <location>Secreted</location>
    </subcellularLocation>
</comment>
<comment type="tissue specificity">
    <text>Haptocorrins are a family of cobalamin-binding glycoproteins found in blood, salivary and mucosal secretions.</text>
</comment>
<comment type="PTM">
    <text>Contains about 30% carbohydrates.</text>
</comment>
<comment type="similarity">
    <text evidence="4">Belongs to the eukaryotic cobalamin transport proteins family.</text>
</comment>
<organism>
    <name type="scientific">Sus scrofa</name>
    <name type="common">Pig</name>
    <dbReference type="NCBI Taxonomy" id="9823"/>
    <lineage>
        <taxon>Eukaryota</taxon>
        <taxon>Metazoa</taxon>
        <taxon>Chordata</taxon>
        <taxon>Craniata</taxon>
        <taxon>Vertebrata</taxon>
        <taxon>Euteleostomi</taxon>
        <taxon>Mammalia</taxon>
        <taxon>Eutheria</taxon>
        <taxon>Laurasiatheria</taxon>
        <taxon>Artiodactyla</taxon>
        <taxon>Suina</taxon>
        <taxon>Suidae</taxon>
        <taxon>Sus</taxon>
    </lineage>
</organism>
<sequence>MRQSHQLPLVGLLLFSLIPSQLCQSCVVSEKDYSHLRLLISAMDNLEQIRGIYGASILLSQRLAGIQNPSLEEELSQRIQDDMNRRDMSNLTSGQLALIILAFGACKTPDVRFIHDHHLVEKLGEKFKEEIKNMEIHNSNPLTNYYQLSFDVLTLCLFRGNYSISNVTHYFNPENKNFNLSGHFSVDTGAVAVLALTCVKRSISNGKIKAAIKDSDTIQKYIESLVHKIQSEKMVVSLETRIAQEKLCRLSLSHQTITKMNQIAKKLWTRCLTHSQGVFRLPIAAAQILPALLGKTYLDVTKLLLVPKVQVNITDEPVPVVPTLSPENISVIYCVKINEISNCINITVFLDVMKAAQEKNSTIYGFTMTETPWGPYITSVQGIWANNNERTYWEHSEQQQITKPRSMGIMLSKMESI</sequence>
<name>TCO1_PIG</name>
<keyword id="KW-0170">Cobalt</keyword>
<keyword id="KW-0171">Cobalt transport</keyword>
<keyword id="KW-0903">Direct protein sequencing</keyword>
<keyword id="KW-1015">Disulfide bond</keyword>
<keyword id="KW-0325">Glycoprotein</keyword>
<keyword id="KW-0406">Ion transport</keyword>
<keyword id="KW-1185">Reference proteome</keyword>
<keyword id="KW-0964">Secreted</keyword>
<keyword id="KW-0732">Signal</keyword>
<keyword id="KW-0813">Transport</keyword>
<dbReference type="EMBL" id="X52566">
    <property type="protein sequence ID" value="CAA36800.1"/>
    <property type="molecule type" value="mRNA"/>
</dbReference>
<dbReference type="PIR" id="S09334">
    <property type="entry name" value="S09334"/>
</dbReference>
<dbReference type="SMR" id="P17630"/>
<dbReference type="FunCoup" id="P17630">
    <property type="interactions" value="50"/>
</dbReference>
<dbReference type="STRING" id="9823.ENSSSCP00000037395"/>
<dbReference type="GlyCosmos" id="P17630">
    <property type="glycosylation" value="8 sites, No reported glycans"/>
</dbReference>
<dbReference type="GlyGen" id="P17630">
    <property type="glycosylation" value="8 sites"/>
</dbReference>
<dbReference type="PaxDb" id="9823-ENSSSCP00000013950"/>
<dbReference type="PeptideAtlas" id="P17630"/>
<dbReference type="InParanoid" id="P17630"/>
<dbReference type="Proteomes" id="UP000008227">
    <property type="component" value="Unplaced"/>
</dbReference>
<dbReference type="Proteomes" id="UP000314985">
    <property type="component" value="Unplaced"/>
</dbReference>
<dbReference type="Proteomes" id="UP000694570">
    <property type="component" value="Unplaced"/>
</dbReference>
<dbReference type="Proteomes" id="UP000694571">
    <property type="component" value="Unplaced"/>
</dbReference>
<dbReference type="Proteomes" id="UP000694720">
    <property type="component" value="Unplaced"/>
</dbReference>
<dbReference type="Proteomes" id="UP000694722">
    <property type="component" value="Unplaced"/>
</dbReference>
<dbReference type="Proteomes" id="UP000694723">
    <property type="component" value="Unplaced"/>
</dbReference>
<dbReference type="Proteomes" id="UP000694724">
    <property type="component" value="Unplaced"/>
</dbReference>
<dbReference type="Proteomes" id="UP000694725">
    <property type="component" value="Unplaced"/>
</dbReference>
<dbReference type="Proteomes" id="UP000694726">
    <property type="component" value="Unplaced"/>
</dbReference>
<dbReference type="Proteomes" id="UP000694727">
    <property type="component" value="Unplaced"/>
</dbReference>
<dbReference type="Proteomes" id="UP000694728">
    <property type="component" value="Unplaced"/>
</dbReference>
<dbReference type="GO" id="GO:0005615">
    <property type="term" value="C:extracellular space"/>
    <property type="evidence" value="ECO:0000318"/>
    <property type="project" value="GO_Central"/>
</dbReference>
<dbReference type="GO" id="GO:0031419">
    <property type="term" value="F:cobalamin binding"/>
    <property type="evidence" value="ECO:0000318"/>
    <property type="project" value="GO_Central"/>
</dbReference>
<dbReference type="GO" id="GO:0015889">
    <property type="term" value="P:cobalamin transport"/>
    <property type="evidence" value="ECO:0000318"/>
    <property type="project" value="GO_Central"/>
</dbReference>
<dbReference type="GO" id="GO:0006824">
    <property type="term" value="P:cobalt ion transport"/>
    <property type="evidence" value="ECO:0007669"/>
    <property type="project" value="UniProtKB-KW"/>
</dbReference>
<dbReference type="Gene3D" id="1.50.10.20">
    <property type="match status" value="1"/>
</dbReference>
<dbReference type="Gene3D" id="2.170.130.30">
    <property type="match status" value="1"/>
</dbReference>
<dbReference type="InterPro" id="IPR002157">
    <property type="entry name" value="Cbl-bd_prot"/>
</dbReference>
<dbReference type="InterPro" id="IPR051588">
    <property type="entry name" value="Cobalamin_Transport"/>
</dbReference>
<dbReference type="InterPro" id="IPR027954">
    <property type="entry name" value="Transcobalamin-like_C"/>
</dbReference>
<dbReference type="PANTHER" id="PTHR10559:SF13">
    <property type="entry name" value="TRANSCOBALAMIN-1"/>
    <property type="match status" value="1"/>
</dbReference>
<dbReference type="PANTHER" id="PTHR10559">
    <property type="entry name" value="TRANSCOBALAMIN-1/GASTRIC INTRINSIC FACTOR"/>
    <property type="match status" value="1"/>
</dbReference>
<dbReference type="Pfam" id="PF01122">
    <property type="entry name" value="Cobalamin_bind"/>
    <property type="match status" value="1"/>
</dbReference>
<dbReference type="Pfam" id="PF14478">
    <property type="entry name" value="DUF4430"/>
    <property type="match status" value="1"/>
</dbReference>
<dbReference type="PROSITE" id="PS00468">
    <property type="entry name" value="COBALAMIN_BINDING"/>
    <property type="match status" value="1"/>
</dbReference>